<sequence length="473" mass="52552">MAVKTYQAGVTQYRQSYWQPDYVPLDTDILACFKITPQPGVDREEAAAAVAAESSCGTWTTVWTDLLTDLDYYKGRAYRLEDVPGDDTCYYAFIAYPIDLFEEGSVVNVFTSLVGNVFGFKAVRALRLEDLRFPIAYVKTCGGPPHGIQVERDRLNKYGRPMLGCTIKPKLGLSAKNYGRACYEALRGGLDFTKDDENINSQPFMRWRDRFDFVMEAVQKAEQETGERKGHYLNVTAPTPEEMYKRAEHAKEIGAPIIMHDYLAGGLCANAGLANWCRDNGILLHIHRAMHAVIDRNPHHGIHFRVLTKILRLSGGDHLHTGTVVGKLEGDRASTLGWIDLLRESFVPEDRSRGIFFDQDWGSMPGCFAVASGGIHVWHMPALVTIFGDDSVLQFGGGTLGHPWGNAAGAHANRVALEACVQARAEGRQLEKEGKDILTAAAAHSPELKIAMETWKEIKFEFEAVDQLAIANK</sequence>
<evidence type="ECO:0000255" key="1">
    <source>
        <dbReference type="HAMAP-Rule" id="MF_01338"/>
    </source>
</evidence>
<proteinExistence type="inferred from homology"/>
<gene>
    <name evidence="1" type="primary">cbbL3</name>
    <name type="ordered locus">Nham_4332</name>
</gene>
<comment type="function">
    <text evidence="1">RuBisCO catalyzes two reactions: the carboxylation of D-ribulose 1,5-bisphosphate, the primary event in carbon dioxide fixation, as well as the oxidative fragmentation of the pentose substrate. Both reactions occur simultaneously and in competition at the same active site.</text>
</comment>
<comment type="catalytic activity">
    <reaction evidence="1">
        <text>2 (2R)-3-phosphoglycerate + 2 H(+) = D-ribulose 1,5-bisphosphate + CO2 + H2O</text>
        <dbReference type="Rhea" id="RHEA:23124"/>
        <dbReference type="ChEBI" id="CHEBI:15377"/>
        <dbReference type="ChEBI" id="CHEBI:15378"/>
        <dbReference type="ChEBI" id="CHEBI:16526"/>
        <dbReference type="ChEBI" id="CHEBI:57870"/>
        <dbReference type="ChEBI" id="CHEBI:58272"/>
        <dbReference type="EC" id="4.1.1.39"/>
    </reaction>
</comment>
<comment type="catalytic activity">
    <reaction evidence="1">
        <text>D-ribulose 1,5-bisphosphate + O2 = 2-phosphoglycolate + (2R)-3-phosphoglycerate + 2 H(+)</text>
        <dbReference type="Rhea" id="RHEA:36631"/>
        <dbReference type="ChEBI" id="CHEBI:15378"/>
        <dbReference type="ChEBI" id="CHEBI:15379"/>
        <dbReference type="ChEBI" id="CHEBI:57870"/>
        <dbReference type="ChEBI" id="CHEBI:58033"/>
        <dbReference type="ChEBI" id="CHEBI:58272"/>
    </reaction>
</comment>
<comment type="cofactor">
    <cofactor evidence="1">
        <name>Mg(2+)</name>
        <dbReference type="ChEBI" id="CHEBI:18420"/>
    </cofactor>
    <text evidence="1">Binds 1 Mg(2+) ion per subunit.</text>
</comment>
<comment type="subunit">
    <text evidence="1">Heterohexadecamer of 8 large chains and 8 small chains.</text>
</comment>
<comment type="miscellaneous">
    <text evidence="1">The basic functional RuBisCO is composed of a large chain homodimer in a 'head-to-tail' conformation. In form I RuBisCO this homodimer is arranged in a barrel-like tetramer with the small subunits forming a tetrameric 'cap' on each end of the 'barrel'.</text>
</comment>
<comment type="similarity">
    <text evidence="1">Belongs to the RuBisCO large chain family. Type I subfamily.</text>
</comment>
<organism>
    <name type="scientific">Nitrobacter hamburgensis (strain DSM 10229 / NCIMB 13809 / X14)</name>
    <dbReference type="NCBI Taxonomy" id="323097"/>
    <lineage>
        <taxon>Bacteria</taxon>
        <taxon>Pseudomonadati</taxon>
        <taxon>Pseudomonadota</taxon>
        <taxon>Alphaproteobacteria</taxon>
        <taxon>Hyphomicrobiales</taxon>
        <taxon>Nitrobacteraceae</taxon>
        <taxon>Nitrobacter</taxon>
    </lineage>
</organism>
<dbReference type="EC" id="4.1.1.39" evidence="1"/>
<dbReference type="EMBL" id="CP000320">
    <property type="protein sequence ID" value="ABE64927.1"/>
    <property type="molecule type" value="Genomic_DNA"/>
</dbReference>
<dbReference type="RefSeq" id="WP_011504815.1">
    <property type="nucleotide sequence ID" value="NC_007959.1"/>
</dbReference>
<dbReference type="SMR" id="Q1QFS0"/>
<dbReference type="KEGG" id="nha:Nham_4332"/>
<dbReference type="HOGENOM" id="CLU_031450_2_0_5"/>
<dbReference type="OrthoDB" id="9764279at2"/>
<dbReference type="Proteomes" id="UP000001953">
    <property type="component" value="Plasmid pNITHX1"/>
</dbReference>
<dbReference type="GO" id="GO:0000287">
    <property type="term" value="F:magnesium ion binding"/>
    <property type="evidence" value="ECO:0007669"/>
    <property type="project" value="UniProtKB-UniRule"/>
</dbReference>
<dbReference type="GO" id="GO:0004497">
    <property type="term" value="F:monooxygenase activity"/>
    <property type="evidence" value="ECO:0007669"/>
    <property type="project" value="UniProtKB-KW"/>
</dbReference>
<dbReference type="GO" id="GO:0016984">
    <property type="term" value="F:ribulose-bisphosphate carboxylase activity"/>
    <property type="evidence" value="ECO:0007669"/>
    <property type="project" value="UniProtKB-UniRule"/>
</dbReference>
<dbReference type="GO" id="GO:0019253">
    <property type="term" value="P:reductive pentose-phosphate cycle"/>
    <property type="evidence" value="ECO:0007669"/>
    <property type="project" value="UniProtKB-UniRule"/>
</dbReference>
<dbReference type="Gene3D" id="3.20.20.110">
    <property type="entry name" value="Ribulose bisphosphate carboxylase, large subunit, C-terminal domain"/>
    <property type="match status" value="1"/>
</dbReference>
<dbReference type="Gene3D" id="3.30.70.150">
    <property type="entry name" value="RuBisCO large subunit, N-terminal domain"/>
    <property type="match status" value="1"/>
</dbReference>
<dbReference type="HAMAP" id="MF_01338">
    <property type="entry name" value="RuBisCO_L_type1"/>
    <property type="match status" value="1"/>
</dbReference>
<dbReference type="InterPro" id="IPR033966">
    <property type="entry name" value="RuBisCO"/>
</dbReference>
<dbReference type="InterPro" id="IPR020878">
    <property type="entry name" value="RuBisCo_large_chain_AS"/>
</dbReference>
<dbReference type="InterPro" id="IPR000685">
    <property type="entry name" value="RuBisCO_lsu_C"/>
</dbReference>
<dbReference type="InterPro" id="IPR036376">
    <property type="entry name" value="RuBisCO_lsu_C_sf"/>
</dbReference>
<dbReference type="InterPro" id="IPR017443">
    <property type="entry name" value="RuBisCO_lsu_fd_N"/>
</dbReference>
<dbReference type="InterPro" id="IPR036422">
    <property type="entry name" value="RuBisCO_lsu_N_sf"/>
</dbReference>
<dbReference type="InterPro" id="IPR020888">
    <property type="entry name" value="RuBisCO_lsuI"/>
</dbReference>
<dbReference type="NCBIfam" id="NF003252">
    <property type="entry name" value="PRK04208.1"/>
    <property type="match status" value="1"/>
</dbReference>
<dbReference type="PANTHER" id="PTHR42704">
    <property type="entry name" value="RIBULOSE BISPHOSPHATE CARBOXYLASE"/>
    <property type="match status" value="1"/>
</dbReference>
<dbReference type="PANTHER" id="PTHR42704:SF17">
    <property type="entry name" value="RIBULOSE BISPHOSPHATE CARBOXYLASE LARGE CHAIN"/>
    <property type="match status" value="1"/>
</dbReference>
<dbReference type="Pfam" id="PF00016">
    <property type="entry name" value="RuBisCO_large"/>
    <property type="match status" value="1"/>
</dbReference>
<dbReference type="Pfam" id="PF02788">
    <property type="entry name" value="RuBisCO_large_N"/>
    <property type="match status" value="1"/>
</dbReference>
<dbReference type="SFLD" id="SFLDG01052">
    <property type="entry name" value="RuBisCO"/>
    <property type="match status" value="1"/>
</dbReference>
<dbReference type="SFLD" id="SFLDS00014">
    <property type="entry name" value="RuBisCO"/>
    <property type="match status" value="1"/>
</dbReference>
<dbReference type="SFLD" id="SFLDG00301">
    <property type="entry name" value="RuBisCO-like_proteins"/>
    <property type="match status" value="1"/>
</dbReference>
<dbReference type="SUPFAM" id="SSF51649">
    <property type="entry name" value="RuBisCo, C-terminal domain"/>
    <property type="match status" value="1"/>
</dbReference>
<dbReference type="SUPFAM" id="SSF54966">
    <property type="entry name" value="RuBisCO, large subunit, small (N-terminal) domain"/>
    <property type="match status" value="1"/>
</dbReference>
<dbReference type="PROSITE" id="PS00157">
    <property type="entry name" value="RUBISCO_LARGE"/>
    <property type="match status" value="1"/>
</dbReference>
<feature type="chain" id="PRO_0000251448" description="Ribulose bisphosphate carboxylase large chain 3">
    <location>
        <begin position="1"/>
        <end position="473"/>
    </location>
</feature>
<feature type="active site" description="Proton acceptor" evidence="1">
    <location>
        <position position="168"/>
    </location>
</feature>
<feature type="active site" description="Proton acceptor" evidence="1">
    <location>
        <position position="287"/>
    </location>
</feature>
<feature type="binding site" description="in homodimeric partner" evidence="1">
    <location>
        <position position="116"/>
    </location>
    <ligand>
        <name>substrate</name>
    </ligand>
</feature>
<feature type="binding site" evidence="1">
    <location>
        <position position="166"/>
    </location>
    <ligand>
        <name>substrate</name>
    </ligand>
</feature>
<feature type="binding site" evidence="1">
    <location>
        <position position="170"/>
    </location>
    <ligand>
        <name>substrate</name>
    </ligand>
</feature>
<feature type="binding site" description="via carbamate group" evidence="1">
    <location>
        <position position="194"/>
    </location>
    <ligand>
        <name>Mg(2+)</name>
        <dbReference type="ChEBI" id="CHEBI:18420"/>
    </ligand>
</feature>
<feature type="binding site" evidence="1">
    <location>
        <position position="196"/>
    </location>
    <ligand>
        <name>Mg(2+)</name>
        <dbReference type="ChEBI" id="CHEBI:18420"/>
    </ligand>
</feature>
<feature type="binding site" evidence="1">
    <location>
        <position position="197"/>
    </location>
    <ligand>
        <name>Mg(2+)</name>
        <dbReference type="ChEBI" id="CHEBI:18420"/>
    </ligand>
</feature>
<feature type="binding site" evidence="1">
    <location>
        <position position="288"/>
    </location>
    <ligand>
        <name>substrate</name>
    </ligand>
</feature>
<feature type="binding site" evidence="1">
    <location>
        <position position="320"/>
    </location>
    <ligand>
        <name>substrate</name>
    </ligand>
</feature>
<feature type="binding site" evidence="1">
    <location>
        <position position="372"/>
    </location>
    <ligand>
        <name>substrate</name>
    </ligand>
</feature>
<feature type="site" description="Transition state stabilizer" evidence="1">
    <location>
        <position position="327"/>
    </location>
</feature>
<feature type="modified residue" description="N6-carboxylysine" evidence="1">
    <location>
        <position position="194"/>
    </location>
</feature>
<accession>Q1QFS0</accession>
<geneLocation type="plasmid">
    <name>1</name>
</geneLocation>
<name>RBL1C_NITHX</name>
<protein>
    <recommendedName>
        <fullName evidence="1">Ribulose bisphosphate carboxylase large chain 3</fullName>
        <shortName evidence="1">RuBisCO large subunit 3</shortName>
        <ecNumber evidence="1">4.1.1.39</ecNumber>
    </recommendedName>
</protein>
<keyword id="KW-0113">Calvin cycle</keyword>
<keyword id="KW-0120">Carbon dioxide fixation</keyword>
<keyword id="KW-0456">Lyase</keyword>
<keyword id="KW-0460">Magnesium</keyword>
<keyword id="KW-0479">Metal-binding</keyword>
<keyword id="KW-0503">Monooxygenase</keyword>
<keyword id="KW-0560">Oxidoreductase</keyword>
<keyword id="KW-0614">Plasmid</keyword>
<keyword id="KW-1185">Reference proteome</keyword>
<reference key="1">
    <citation type="submission" date="2006-03" db="EMBL/GenBank/DDBJ databases">
        <title>Complete sequence of plasmid 1 of Nitrobacter hamburgensis X14.</title>
        <authorList>
            <consortium name="US DOE Joint Genome Institute"/>
            <person name="Copeland A."/>
            <person name="Lucas S."/>
            <person name="Lapidus A."/>
            <person name="Barry K."/>
            <person name="Detter J.C."/>
            <person name="Glavina del Rio T."/>
            <person name="Hammon N."/>
            <person name="Israni S."/>
            <person name="Dalin E."/>
            <person name="Tice H."/>
            <person name="Pitluck S."/>
            <person name="Chain P."/>
            <person name="Malfatti S."/>
            <person name="Shin M."/>
            <person name="Vergez L."/>
            <person name="Schmutz J."/>
            <person name="Larimer F."/>
            <person name="Land M."/>
            <person name="Hauser L."/>
            <person name="Kyrpides N."/>
            <person name="Ivanova N."/>
            <person name="Ward B."/>
            <person name="Arp D."/>
            <person name="Klotz M."/>
            <person name="Stein L."/>
            <person name="O'Mullan G."/>
            <person name="Starkenburg S."/>
            <person name="Sayavedra L."/>
            <person name="Poret-Peterson A.T."/>
            <person name="Gentry M.E."/>
            <person name="Bruce D."/>
            <person name="Richardson P."/>
        </authorList>
    </citation>
    <scope>NUCLEOTIDE SEQUENCE [LARGE SCALE GENOMIC DNA]</scope>
    <source>
        <strain>DSM 10229 / NCIMB 13809 / X14</strain>
    </source>
</reference>